<evidence type="ECO:0000255" key="1">
    <source>
        <dbReference type="HAMAP-Rule" id="MF_00092"/>
    </source>
</evidence>
<comment type="function">
    <text evidence="1">Endonuclease that is involved in the suppression of homologous recombination and thus may have a key role in the control of bacterial genetic diversity.</text>
</comment>
<comment type="function">
    <text evidence="1">Acts as a ribosome collision sensor, splitting the ribosome into its 2 subunits. Detects stalled/collided 70S ribosomes which it binds and splits by an ATP-hydrolysis driven conformational change. Acts upstream of the ribosome quality control system (RQC), a ribosome-associated complex that mediates the extraction of incompletely synthesized nascent chains from stalled ribosomes and their subsequent degradation. Probably generates substrates for RQC.</text>
</comment>
<comment type="subunit">
    <text evidence="1">Homodimer. Binds to stalled ribosomes, contacting rRNA.</text>
</comment>
<comment type="similarity">
    <text evidence="1">Belongs to the DNA mismatch repair MutS family. MutS2 subfamily.</text>
</comment>
<dbReference type="EC" id="3.1.-.-" evidence="1"/>
<dbReference type="EC" id="3.6.4.-" evidence="1"/>
<dbReference type="EMBL" id="CP000728">
    <property type="protein sequence ID" value="ABS42241.1"/>
    <property type="molecule type" value="Genomic_DNA"/>
</dbReference>
<dbReference type="RefSeq" id="WP_012100828.1">
    <property type="nucleotide sequence ID" value="NC_009699.1"/>
</dbReference>
<dbReference type="SMR" id="A7GHZ0"/>
<dbReference type="KEGG" id="cbf:CLI_3181"/>
<dbReference type="HOGENOM" id="CLU_011252_2_1_9"/>
<dbReference type="Proteomes" id="UP000002410">
    <property type="component" value="Chromosome"/>
</dbReference>
<dbReference type="GO" id="GO:0005524">
    <property type="term" value="F:ATP binding"/>
    <property type="evidence" value="ECO:0007669"/>
    <property type="project" value="UniProtKB-UniRule"/>
</dbReference>
<dbReference type="GO" id="GO:0016887">
    <property type="term" value="F:ATP hydrolysis activity"/>
    <property type="evidence" value="ECO:0007669"/>
    <property type="project" value="InterPro"/>
</dbReference>
<dbReference type="GO" id="GO:0140664">
    <property type="term" value="F:ATP-dependent DNA damage sensor activity"/>
    <property type="evidence" value="ECO:0007669"/>
    <property type="project" value="InterPro"/>
</dbReference>
<dbReference type="GO" id="GO:0004519">
    <property type="term" value="F:endonuclease activity"/>
    <property type="evidence" value="ECO:0007669"/>
    <property type="project" value="UniProtKB-UniRule"/>
</dbReference>
<dbReference type="GO" id="GO:0030983">
    <property type="term" value="F:mismatched DNA binding"/>
    <property type="evidence" value="ECO:0007669"/>
    <property type="project" value="InterPro"/>
</dbReference>
<dbReference type="GO" id="GO:0043023">
    <property type="term" value="F:ribosomal large subunit binding"/>
    <property type="evidence" value="ECO:0007669"/>
    <property type="project" value="UniProtKB-UniRule"/>
</dbReference>
<dbReference type="GO" id="GO:0019843">
    <property type="term" value="F:rRNA binding"/>
    <property type="evidence" value="ECO:0007669"/>
    <property type="project" value="UniProtKB-UniRule"/>
</dbReference>
<dbReference type="GO" id="GO:0006298">
    <property type="term" value="P:mismatch repair"/>
    <property type="evidence" value="ECO:0007669"/>
    <property type="project" value="InterPro"/>
</dbReference>
<dbReference type="GO" id="GO:0045910">
    <property type="term" value="P:negative regulation of DNA recombination"/>
    <property type="evidence" value="ECO:0007669"/>
    <property type="project" value="InterPro"/>
</dbReference>
<dbReference type="GO" id="GO:0072344">
    <property type="term" value="P:rescue of stalled ribosome"/>
    <property type="evidence" value="ECO:0007669"/>
    <property type="project" value="UniProtKB-UniRule"/>
</dbReference>
<dbReference type="CDD" id="cd03280">
    <property type="entry name" value="ABC_MutS2"/>
    <property type="match status" value="1"/>
</dbReference>
<dbReference type="FunFam" id="3.30.1370.110:FF:000007">
    <property type="entry name" value="Endonuclease MutS2"/>
    <property type="match status" value="1"/>
</dbReference>
<dbReference type="FunFam" id="3.40.50.300:FF:000830">
    <property type="entry name" value="Endonuclease MutS2"/>
    <property type="match status" value="1"/>
</dbReference>
<dbReference type="Gene3D" id="3.30.1370.110">
    <property type="match status" value="1"/>
</dbReference>
<dbReference type="Gene3D" id="3.40.50.300">
    <property type="entry name" value="P-loop containing nucleotide triphosphate hydrolases"/>
    <property type="match status" value="1"/>
</dbReference>
<dbReference type="HAMAP" id="MF_00092">
    <property type="entry name" value="MutS2"/>
    <property type="match status" value="1"/>
</dbReference>
<dbReference type="InterPro" id="IPR000432">
    <property type="entry name" value="DNA_mismatch_repair_MutS_C"/>
</dbReference>
<dbReference type="InterPro" id="IPR007696">
    <property type="entry name" value="DNA_mismatch_repair_MutS_core"/>
</dbReference>
<dbReference type="InterPro" id="IPR036187">
    <property type="entry name" value="DNA_mismatch_repair_MutS_sf"/>
</dbReference>
<dbReference type="InterPro" id="IPR046893">
    <property type="entry name" value="MSSS"/>
</dbReference>
<dbReference type="InterPro" id="IPR045076">
    <property type="entry name" value="MutS"/>
</dbReference>
<dbReference type="InterPro" id="IPR005747">
    <property type="entry name" value="MutS2"/>
</dbReference>
<dbReference type="InterPro" id="IPR027417">
    <property type="entry name" value="P-loop_NTPase"/>
</dbReference>
<dbReference type="InterPro" id="IPR002625">
    <property type="entry name" value="Smr_dom"/>
</dbReference>
<dbReference type="InterPro" id="IPR036063">
    <property type="entry name" value="Smr_dom_sf"/>
</dbReference>
<dbReference type="NCBIfam" id="TIGR01069">
    <property type="entry name" value="mutS2"/>
    <property type="match status" value="1"/>
</dbReference>
<dbReference type="PANTHER" id="PTHR48466:SF2">
    <property type="entry name" value="OS10G0509000 PROTEIN"/>
    <property type="match status" value="1"/>
</dbReference>
<dbReference type="PANTHER" id="PTHR48466">
    <property type="entry name" value="OS10G0509000 PROTEIN-RELATED"/>
    <property type="match status" value="1"/>
</dbReference>
<dbReference type="Pfam" id="PF20297">
    <property type="entry name" value="MSSS"/>
    <property type="match status" value="1"/>
</dbReference>
<dbReference type="Pfam" id="PF00488">
    <property type="entry name" value="MutS_V"/>
    <property type="match status" value="1"/>
</dbReference>
<dbReference type="Pfam" id="PF01713">
    <property type="entry name" value="Smr"/>
    <property type="match status" value="1"/>
</dbReference>
<dbReference type="PIRSF" id="PIRSF005814">
    <property type="entry name" value="MutS_YshD"/>
    <property type="match status" value="1"/>
</dbReference>
<dbReference type="SMART" id="SM00534">
    <property type="entry name" value="MUTSac"/>
    <property type="match status" value="1"/>
</dbReference>
<dbReference type="SMART" id="SM00533">
    <property type="entry name" value="MUTSd"/>
    <property type="match status" value="1"/>
</dbReference>
<dbReference type="SMART" id="SM00463">
    <property type="entry name" value="SMR"/>
    <property type="match status" value="1"/>
</dbReference>
<dbReference type="SUPFAM" id="SSF48334">
    <property type="entry name" value="DNA repair protein MutS, domain III"/>
    <property type="match status" value="1"/>
</dbReference>
<dbReference type="SUPFAM" id="SSF52540">
    <property type="entry name" value="P-loop containing nucleoside triphosphate hydrolases"/>
    <property type="match status" value="1"/>
</dbReference>
<dbReference type="SUPFAM" id="SSF160443">
    <property type="entry name" value="SMR domain-like"/>
    <property type="match status" value="1"/>
</dbReference>
<dbReference type="PROSITE" id="PS00486">
    <property type="entry name" value="DNA_MISMATCH_REPAIR_2"/>
    <property type="match status" value="1"/>
</dbReference>
<dbReference type="PROSITE" id="PS50828">
    <property type="entry name" value="SMR"/>
    <property type="match status" value="1"/>
</dbReference>
<feature type="chain" id="PRO_1000075474" description="Endonuclease MutS2">
    <location>
        <begin position="1"/>
        <end position="788"/>
    </location>
</feature>
<feature type="domain" description="Smr" evidence="1">
    <location>
        <begin position="713"/>
        <end position="788"/>
    </location>
</feature>
<feature type="binding site" evidence="1">
    <location>
        <begin position="332"/>
        <end position="339"/>
    </location>
    <ligand>
        <name>ATP</name>
        <dbReference type="ChEBI" id="CHEBI:30616"/>
    </ligand>
</feature>
<sequence length="788" mass="88721">MKDKSIKVLEFNKIQEILKNYTCTKAAKDIIEDLKPYDSVYEVREHLEEAKEAFKLLITKGAPPFEGVYDIRNGIYLAEKGSALLPGQLLKIAAVLRCARRFKEYINHKEEEESYRVLENICEGIFSLPKIEEEIFNAIEGEDEIADRASSTLYNIRRSLKEKNYSVRDKINSLVRSYSSYLQENIYTVRGDRYVLPVKAEHKGAVPGLVHDQSSTGATLFIEPMSLVNLNNEIKELMLKEKAEIERILTVLSAKINANITGVKTDANIVWELDFIFAKAKFASEYNCTCPTINNEGIVDIIEGRHPLIDRREVVPISVKLGEEFTSLMITGPNTGGKTVTLKTVGLIHLMAMSGLMIPARENSVISYFNNVFADIGDEQSIEQSLSTFSSHMKNIVEIMDKADENSLVLFDELGAGTDPTEGAALAISILENLRKRGTKIIATTHYSELKAYALRKEGVENASVEFDVETLRPTYRLLIGIPGKSNAFEISKRLGLPDYIIDFARENISNENIRFEELIENLQEKSIKAQEDARLAENLKLERDKEKKKYEEKLEGLQKVRDNALIDARREAKNIIKEAKEEADKILKDIRQLERMGYSSDARRKLEEERKKLKDKLDSIEEKEIKTVHKGEALKNVKEGDEVLLASINQKVIVLSKPDNKGDVLVQAGIMKITANIKDLRAAKGSNFNSSSSKIKKSKKLNLNLRRVESSVDLRGMDAEEAIYTVDKYLDEAYLGGLGEVTIVHGKGTGVLRKTIMDMLKGHSHVKRHRLGEYGEGGTGVTVVELK</sequence>
<accession>A7GHZ0</accession>
<keyword id="KW-0067">ATP-binding</keyword>
<keyword id="KW-0238">DNA-binding</keyword>
<keyword id="KW-0255">Endonuclease</keyword>
<keyword id="KW-0378">Hydrolase</keyword>
<keyword id="KW-0540">Nuclease</keyword>
<keyword id="KW-0547">Nucleotide-binding</keyword>
<keyword id="KW-0694">RNA-binding</keyword>
<keyword id="KW-0699">rRNA-binding</keyword>
<proteinExistence type="inferred from homology"/>
<protein>
    <recommendedName>
        <fullName evidence="1">Endonuclease MutS2</fullName>
        <ecNumber evidence="1">3.1.-.-</ecNumber>
    </recommendedName>
    <alternativeName>
        <fullName evidence="1">Ribosome-associated protein quality control-upstream factor</fullName>
        <shortName evidence="1">RQC-upstream factor</shortName>
        <shortName evidence="1">RqcU</shortName>
        <ecNumber evidence="1">3.6.4.-</ecNumber>
    </alternativeName>
</protein>
<name>MUTS2_CLOBL</name>
<gene>
    <name evidence="1" type="primary">mutS2</name>
    <name evidence="1" type="synonym">rqcU</name>
    <name type="ordered locus">CLI_3181</name>
</gene>
<organism>
    <name type="scientific">Clostridium botulinum (strain Langeland / NCTC 10281 / Type F)</name>
    <dbReference type="NCBI Taxonomy" id="441772"/>
    <lineage>
        <taxon>Bacteria</taxon>
        <taxon>Bacillati</taxon>
        <taxon>Bacillota</taxon>
        <taxon>Clostridia</taxon>
        <taxon>Eubacteriales</taxon>
        <taxon>Clostridiaceae</taxon>
        <taxon>Clostridium</taxon>
    </lineage>
</organism>
<reference key="1">
    <citation type="submission" date="2007-06" db="EMBL/GenBank/DDBJ databases">
        <authorList>
            <person name="Brinkac L.M."/>
            <person name="Daugherty S."/>
            <person name="Dodson R.J."/>
            <person name="Madupu R."/>
            <person name="Brown J.L."/>
            <person name="Bruce D."/>
            <person name="Detter C."/>
            <person name="Munk C."/>
            <person name="Smith L.A."/>
            <person name="Smith T.J."/>
            <person name="White O."/>
            <person name="Brettin T.S."/>
        </authorList>
    </citation>
    <scope>NUCLEOTIDE SEQUENCE [LARGE SCALE GENOMIC DNA]</scope>
    <source>
        <strain>Langeland / NCTC 10281 / Type F</strain>
    </source>
</reference>